<proteinExistence type="inferred from homology"/>
<sequence>MSQSTSVLRRNGFTFKQFFVAHDRCAMKVGTDGILLGAWAPVAGVKRCLDIGAGSGLLALMLAQRTDDSVMIDAVELESEAAAQAQENINQSPWAERINVHTADIQQWITQQTVRFDLIISNPPYYQQGVECSTPQREQARYTTTLDHPSLLTCAAECITEEGFFCVVLPEQIGNGFTELALSMGWHLRLRTDVAENEARLPHRVLLAFSPQAGECFSDRLVIRGPDQNYSEAYTALTQAFYLFM</sequence>
<comment type="function">
    <text evidence="1">Specifically methylates the adenine in position 37 of tRNA(1)(Val) (anticodon cmo5UAC).</text>
</comment>
<comment type="catalytic activity">
    <reaction evidence="1">
        <text>adenosine(37) in tRNA1(Val) + S-adenosyl-L-methionine = N(6)-methyladenosine(37) in tRNA1(Val) + S-adenosyl-L-homocysteine + H(+)</text>
        <dbReference type="Rhea" id="RHEA:43160"/>
        <dbReference type="Rhea" id="RHEA-COMP:10369"/>
        <dbReference type="Rhea" id="RHEA-COMP:10370"/>
        <dbReference type="ChEBI" id="CHEBI:15378"/>
        <dbReference type="ChEBI" id="CHEBI:57856"/>
        <dbReference type="ChEBI" id="CHEBI:59789"/>
        <dbReference type="ChEBI" id="CHEBI:74411"/>
        <dbReference type="ChEBI" id="CHEBI:74449"/>
        <dbReference type="EC" id="2.1.1.223"/>
    </reaction>
</comment>
<comment type="subcellular location">
    <subcellularLocation>
        <location evidence="1">Cytoplasm</location>
    </subcellularLocation>
</comment>
<comment type="similarity">
    <text evidence="1">Belongs to the methyltransferase superfamily. tRNA (adenine-N(6)-)-methyltransferase family.</text>
</comment>
<evidence type="ECO:0000255" key="1">
    <source>
        <dbReference type="HAMAP-Rule" id="MF_01872"/>
    </source>
</evidence>
<dbReference type="EC" id="2.1.1.223" evidence="1"/>
<dbReference type="EMBL" id="CP001396">
    <property type="protein sequence ID" value="ACR65084.1"/>
    <property type="molecule type" value="Genomic_DNA"/>
</dbReference>
<dbReference type="SMR" id="C4ZYJ8"/>
<dbReference type="KEGG" id="ebw:BWG_2339"/>
<dbReference type="HOGENOM" id="CLU_061983_0_0_6"/>
<dbReference type="GO" id="GO:0005737">
    <property type="term" value="C:cytoplasm"/>
    <property type="evidence" value="ECO:0007669"/>
    <property type="project" value="UniProtKB-SubCell"/>
</dbReference>
<dbReference type="GO" id="GO:0003676">
    <property type="term" value="F:nucleic acid binding"/>
    <property type="evidence" value="ECO:0007669"/>
    <property type="project" value="InterPro"/>
</dbReference>
<dbReference type="GO" id="GO:0016430">
    <property type="term" value="F:tRNA (adenine-N6)-methyltransferase activity"/>
    <property type="evidence" value="ECO:0007669"/>
    <property type="project" value="UniProtKB-UniRule"/>
</dbReference>
<dbReference type="GO" id="GO:0032259">
    <property type="term" value="P:methylation"/>
    <property type="evidence" value="ECO:0007669"/>
    <property type="project" value="UniProtKB-KW"/>
</dbReference>
<dbReference type="GO" id="GO:0008033">
    <property type="term" value="P:tRNA processing"/>
    <property type="evidence" value="ECO:0007669"/>
    <property type="project" value="UniProtKB-UniRule"/>
</dbReference>
<dbReference type="CDD" id="cd02440">
    <property type="entry name" value="AdoMet_MTases"/>
    <property type="match status" value="1"/>
</dbReference>
<dbReference type="FunFam" id="3.40.50.150:FF:000087">
    <property type="entry name" value="tRNA1(Val) (adenine(37)-N6)-methyltransferase"/>
    <property type="match status" value="1"/>
</dbReference>
<dbReference type="Gene3D" id="3.40.50.150">
    <property type="entry name" value="Vaccinia Virus protein VP39"/>
    <property type="match status" value="1"/>
</dbReference>
<dbReference type="HAMAP" id="MF_01872">
    <property type="entry name" value="tRNA_methyltr_YfiC"/>
    <property type="match status" value="1"/>
</dbReference>
<dbReference type="InterPro" id="IPR002052">
    <property type="entry name" value="DNA_methylase_N6_adenine_CS"/>
</dbReference>
<dbReference type="InterPro" id="IPR029063">
    <property type="entry name" value="SAM-dependent_MTases_sf"/>
</dbReference>
<dbReference type="InterPro" id="IPR007848">
    <property type="entry name" value="Small_mtfrase_dom"/>
</dbReference>
<dbReference type="InterPro" id="IPR050210">
    <property type="entry name" value="tRNA_Adenine-N(6)_MTase"/>
</dbReference>
<dbReference type="InterPro" id="IPR022882">
    <property type="entry name" value="tRNA_adenine-N6_MeTrfase"/>
</dbReference>
<dbReference type="NCBIfam" id="NF047853">
    <property type="entry name" value="tRm6a37MtseTrmN"/>
    <property type="match status" value="1"/>
</dbReference>
<dbReference type="PANTHER" id="PTHR47739">
    <property type="entry name" value="TRNA1(VAL) (ADENINE(37)-N6)-METHYLTRANSFERASE"/>
    <property type="match status" value="1"/>
</dbReference>
<dbReference type="PANTHER" id="PTHR47739:SF1">
    <property type="entry name" value="TRNA1(VAL) (ADENINE(37)-N6)-METHYLTRANSFERASE"/>
    <property type="match status" value="1"/>
</dbReference>
<dbReference type="Pfam" id="PF05175">
    <property type="entry name" value="MTS"/>
    <property type="match status" value="1"/>
</dbReference>
<dbReference type="SUPFAM" id="SSF53335">
    <property type="entry name" value="S-adenosyl-L-methionine-dependent methyltransferases"/>
    <property type="match status" value="1"/>
</dbReference>
<dbReference type="PROSITE" id="PS00092">
    <property type="entry name" value="N6_MTASE"/>
    <property type="match status" value="1"/>
</dbReference>
<gene>
    <name evidence="1" type="primary">yfiC</name>
    <name type="ordered locus">BWG_2339</name>
</gene>
<protein>
    <recommendedName>
        <fullName evidence="1">tRNA1(Val) (adenine(37)-N6)-methyltransferase</fullName>
        <ecNumber evidence="1">2.1.1.223</ecNumber>
    </recommendedName>
    <alternativeName>
        <fullName evidence="1">tRNA m6A37 methyltransferase</fullName>
    </alternativeName>
</protein>
<organism>
    <name type="scientific">Escherichia coli (strain K12 / MC4100 / BW2952)</name>
    <dbReference type="NCBI Taxonomy" id="595496"/>
    <lineage>
        <taxon>Bacteria</taxon>
        <taxon>Pseudomonadati</taxon>
        <taxon>Pseudomonadota</taxon>
        <taxon>Gammaproteobacteria</taxon>
        <taxon>Enterobacterales</taxon>
        <taxon>Enterobacteriaceae</taxon>
        <taxon>Escherichia</taxon>
    </lineage>
</organism>
<name>TRMN6_ECOBW</name>
<feature type="chain" id="PRO_0000387359" description="tRNA1(Val) (adenine(37)-N6)-methyltransferase">
    <location>
        <begin position="1"/>
        <end position="245"/>
    </location>
</feature>
<reference key="1">
    <citation type="journal article" date="2009" name="J. Bacteriol.">
        <title>Genomic sequencing reveals regulatory mutations and recombinational events in the widely used MC4100 lineage of Escherichia coli K-12.</title>
        <authorList>
            <person name="Ferenci T."/>
            <person name="Zhou Z."/>
            <person name="Betteridge T."/>
            <person name="Ren Y."/>
            <person name="Liu Y."/>
            <person name="Feng L."/>
            <person name="Reeves P.R."/>
            <person name="Wang L."/>
        </authorList>
    </citation>
    <scope>NUCLEOTIDE SEQUENCE [LARGE SCALE GENOMIC DNA]</scope>
    <source>
        <strain>K12 / MC4100 / BW2952</strain>
    </source>
</reference>
<keyword id="KW-0963">Cytoplasm</keyword>
<keyword id="KW-0489">Methyltransferase</keyword>
<keyword id="KW-0949">S-adenosyl-L-methionine</keyword>
<keyword id="KW-0808">Transferase</keyword>
<keyword id="KW-0819">tRNA processing</keyword>
<accession>C4ZYJ8</accession>